<name>RUVC_CAMJE</name>
<accession>Q9PLU8</accession>
<accession>Q0P7Q1</accession>
<organism>
    <name type="scientific">Campylobacter jejuni subsp. jejuni serotype O:2 (strain ATCC 700819 / NCTC 11168)</name>
    <dbReference type="NCBI Taxonomy" id="192222"/>
    <lineage>
        <taxon>Bacteria</taxon>
        <taxon>Pseudomonadati</taxon>
        <taxon>Campylobacterota</taxon>
        <taxon>Epsilonproteobacteria</taxon>
        <taxon>Campylobacterales</taxon>
        <taxon>Campylobacteraceae</taxon>
        <taxon>Campylobacter</taxon>
    </lineage>
</organism>
<comment type="function">
    <text evidence="1">The RuvA-RuvB-RuvC complex processes Holliday junction (HJ) DNA during genetic recombination and DNA repair. Endonuclease that resolves HJ intermediates. Cleaves cruciform DNA by making single-stranded nicks across the HJ at symmetrical positions within the homologous arms, yielding a 5'-phosphate and a 3'-hydroxyl group; requires a central core of homology in the junction. The consensus cleavage sequence is 5'-(A/T)TT(C/G)-3'. Cleavage occurs on the 3'-side of the TT dinucleotide at the point of strand exchange. HJ branch migration catalyzed by RuvA-RuvB allows RuvC to scan DNA until it finds its consensus sequence, where it cleaves and resolves the cruciform DNA.</text>
</comment>
<comment type="catalytic activity">
    <reaction evidence="1">
        <text>Endonucleolytic cleavage at a junction such as a reciprocal single-stranded crossover between two homologous DNA duplexes (Holliday junction).</text>
        <dbReference type="EC" id="3.1.21.10"/>
    </reaction>
</comment>
<comment type="cofactor">
    <cofactor evidence="1">
        <name>Mg(2+)</name>
        <dbReference type="ChEBI" id="CHEBI:18420"/>
    </cofactor>
    <text evidence="1">Binds 2 Mg(2+) ion per subunit.</text>
</comment>
<comment type="subunit">
    <text evidence="1">Homodimer which binds Holliday junction (HJ) DNA. The HJ becomes 2-fold symmetrical on binding to RuvC with unstacked arms; it has a different conformation from HJ DNA in complex with RuvA. In the full resolvosome a probable DNA-RuvA(4)-RuvB(12)-RuvC(2) complex forms which resolves the HJ.</text>
</comment>
<comment type="subcellular location">
    <subcellularLocation>
        <location evidence="1">Cytoplasm</location>
    </subcellularLocation>
</comment>
<comment type="similarity">
    <text evidence="1">Belongs to the RuvC family.</text>
</comment>
<keyword id="KW-0963">Cytoplasm</keyword>
<keyword id="KW-0227">DNA damage</keyword>
<keyword id="KW-0233">DNA recombination</keyword>
<keyword id="KW-0234">DNA repair</keyword>
<keyword id="KW-0238">DNA-binding</keyword>
<keyword id="KW-0255">Endonuclease</keyword>
<keyword id="KW-0378">Hydrolase</keyword>
<keyword id="KW-0460">Magnesium</keyword>
<keyword id="KW-0479">Metal-binding</keyword>
<keyword id="KW-0540">Nuclease</keyword>
<keyword id="KW-1185">Reference proteome</keyword>
<dbReference type="EC" id="3.1.21.10" evidence="1"/>
<dbReference type="EMBL" id="AL111168">
    <property type="protein sequence ID" value="CAL35824.1"/>
    <property type="molecule type" value="Genomic_DNA"/>
</dbReference>
<dbReference type="PIR" id="F81271">
    <property type="entry name" value="F81271"/>
</dbReference>
<dbReference type="RefSeq" id="WP_010891952.1">
    <property type="nucleotide sequence ID" value="NZ_SZUC01000002.1"/>
</dbReference>
<dbReference type="RefSeq" id="YP_002345096.1">
    <property type="nucleotide sequence ID" value="NC_002163.1"/>
</dbReference>
<dbReference type="SMR" id="Q9PLU8"/>
<dbReference type="IntAct" id="Q9PLU8">
    <property type="interactions" value="5"/>
</dbReference>
<dbReference type="STRING" id="192222.Cj1731c"/>
<dbReference type="PaxDb" id="192222-Cj1731c"/>
<dbReference type="EnsemblBacteria" id="CAL35824">
    <property type="protein sequence ID" value="CAL35824"/>
    <property type="gene ID" value="Cj1731c"/>
</dbReference>
<dbReference type="GeneID" id="906005"/>
<dbReference type="KEGG" id="cje:Cj1731c"/>
<dbReference type="PATRIC" id="fig|192222.6.peg.1702"/>
<dbReference type="eggNOG" id="COG0817">
    <property type="taxonomic scope" value="Bacteria"/>
</dbReference>
<dbReference type="HOGENOM" id="CLU_091257_3_0_7"/>
<dbReference type="OrthoDB" id="9805499at2"/>
<dbReference type="Proteomes" id="UP000000799">
    <property type="component" value="Chromosome"/>
</dbReference>
<dbReference type="GO" id="GO:0005737">
    <property type="term" value="C:cytoplasm"/>
    <property type="evidence" value="ECO:0007669"/>
    <property type="project" value="UniProtKB-SubCell"/>
</dbReference>
<dbReference type="GO" id="GO:0048476">
    <property type="term" value="C:Holliday junction resolvase complex"/>
    <property type="evidence" value="ECO:0007669"/>
    <property type="project" value="UniProtKB-UniRule"/>
</dbReference>
<dbReference type="GO" id="GO:0008821">
    <property type="term" value="F:crossover junction DNA endonuclease activity"/>
    <property type="evidence" value="ECO:0007669"/>
    <property type="project" value="UniProtKB-UniRule"/>
</dbReference>
<dbReference type="GO" id="GO:0003677">
    <property type="term" value="F:DNA binding"/>
    <property type="evidence" value="ECO:0007669"/>
    <property type="project" value="UniProtKB-KW"/>
</dbReference>
<dbReference type="GO" id="GO:0000287">
    <property type="term" value="F:magnesium ion binding"/>
    <property type="evidence" value="ECO:0007669"/>
    <property type="project" value="UniProtKB-UniRule"/>
</dbReference>
<dbReference type="GO" id="GO:0006310">
    <property type="term" value="P:DNA recombination"/>
    <property type="evidence" value="ECO:0007669"/>
    <property type="project" value="UniProtKB-UniRule"/>
</dbReference>
<dbReference type="GO" id="GO:0006281">
    <property type="term" value="P:DNA repair"/>
    <property type="evidence" value="ECO:0007669"/>
    <property type="project" value="UniProtKB-UniRule"/>
</dbReference>
<dbReference type="CDD" id="cd16962">
    <property type="entry name" value="RuvC"/>
    <property type="match status" value="1"/>
</dbReference>
<dbReference type="FunFam" id="3.30.420.10:FF:000002">
    <property type="entry name" value="Crossover junction endodeoxyribonuclease RuvC"/>
    <property type="match status" value="1"/>
</dbReference>
<dbReference type="Gene3D" id="3.30.420.10">
    <property type="entry name" value="Ribonuclease H-like superfamily/Ribonuclease H"/>
    <property type="match status" value="1"/>
</dbReference>
<dbReference type="HAMAP" id="MF_00034">
    <property type="entry name" value="RuvC"/>
    <property type="match status" value="1"/>
</dbReference>
<dbReference type="InterPro" id="IPR012337">
    <property type="entry name" value="RNaseH-like_sf"/>
</dbReference>
<dbReference type="InterPro" id="IPR036397">
    <property type="entry name" value="RNaseH_sf"/>
</dbReference>
<dbReference type="InterPro" id="IPR020563">
    <property type="entry name" value="X-over_junc_endoDNase_Mg_BS"/>
</dbReference>
<dbReference type="InterPro" id="IPR002176">
    <property type="entry name" value="X-over_junc_endoDNase_RuvC"/>
</dbReference>
<dbReference type="NCBIfam" id="TIGR00228">
    <property type="entry name" value="ruvC"/>
    <property type="match status" value="1"/>
</dbReference>
<dbReference type="PANTHER" id="PTHR30194">
    <property type="entry name" value="CROSSOVER JUNCTION ENDODEOXYRIBONUCLEASE RUVC"/>
    <property type="match status" value="1"/>
</dbReference>
<dbReference type="PANTHER" id="PTHR30194:SF3">
    <property type="entry name" value="CROSSOVER JUNCTION ENDODEOXYRIBONUCLEASE RUVC"/>
    <property type="match status" value="1"/>
</dbReference>
<dbReference type="Pfam" id="PF02075">
    <property type="entry name" value="RuvC"/>
    <property type="match status" value="1"/>
</dbReference>
<dbReference type="PRINTS" id="PR00696">
    <property type="entry name" value="RSOLVASERUVC"/>
</dbReference>
<dbReference type="SUPFAM" id="SSF53098">
    <property type="entry name" value="Ribonuclease H-like"/>
    <property type="match status" value="1"/>
</dbReference>
<dbReference type="PROSITE" id="PS01321">
    <property type="entry name" value="RUVC"/>
    <property type="match status" value="1"/>
</dbReference>
<gene>
    <name evidence="1" type="primary">ruvC</name>
    <name type="ordered locus">Cj1731c</name>
</gene>
<protein>
    <recommendedName>
        <fullName evidence="1">Crossover junction endodeoxyribonuclease RuvC</fullName>
        <ecNumber evidence="1">3.1.21.10</ecNumber>
    </recommendedName>
    <alternativeName>
        <fullName evidence="1">Holliday junction nuclease RuvC</fullName>
    </alternativeName>
    <alternativeName>
        <fullName evidence="1">Holliday junction resolvase RuvC</fullName>
    </alternativeName>
</protein>
<evidence type="ECO:0000255" key="1">
    <source>
        <dbReference type="HAMAP-Rule" id="MF_00034"/>
    </source>
</evidence>
<sequence length="160" mass="17651">MNLKILGIDPGSRNCGYAIIEADKGKNILIEAGLIKIKPSTLQYQITELCEGLDLIFKNHSFDEVAIEDIFFAYNPKTVLKLAQFRGALSLKILQIHGDFAEYTPLQVKKAVTGKAKATKEQVAFMVKRLLGLSKDIKPLDITDAIAVALTHAANLRVRV</sequence>
<reference key="1">
    <citation type="journal article" date="2000" name="Nature">
        <title>The genome sequence of the food-borne pathogen Campylobacter jejuni reveals hypervariable sequences.</title>
        <authorList>
            <person name="Parkhill J."/>
            <person name="Wren B.W."/>
            <person name="Mungall K.L."/>
            <person name="Ketley J.M."/>
            <person name="Churcher C.M."/>
            <person name="Basham D."/>
            <person name="Chillingworth T."/>
            <person name="Davies R.M."/>
            <person name="Feltwell T."/>
            <person name="Holroyd S."/>
            <person name="Jagels K."/>
            <person name="Karlyshev A.V."/>
            <person name="Moule S."/>
            <person name="Pallen M.J."/>
            <person name="Penn C.W."/>
            <person name="Quail M.A."/>
            <person name="Rajandream M.A."/>
            <person name="Rutherford K.M."/>
            <person name="van Vliet A.H.M."/>
            <person name="Whitehead S."/>
            <person name="Barrell B.G."/>
        </authorList>
    </citation>
    <scope>NUCLEOTIDE SEQUENCE [LARGE SCALE GENOMIC DNA]</scope>
    <source>
        <strain>ATCC 700819 / NCTC 11168</strain>
    </source>
</reference>
<proteinExistence type="inferred from homology"/>
<feature type="chain" id="PRO_0000183083" description="Crossover junction endodeoxyribonuclease RuvC">
    <location>
        <begin position="1"/>
        <end position="160"/>
    </location>
</feature>
<feature type="active site" evidence="1">
    <location>
        <position position="9"/>
    </location>
</feature>
<feature type="active site" evidence="1">
    <location>
        <position position="68"/>
    </location>
</feature>
<feature type="active site" evidence="1">
    <location>
        <position position="141"/>
    </location>
</feature>
<feature type="binding site" evidence="1">
    <location>
        <position position="9"/>
    </location>
    <ligand>
        <name>Mg(2+)</name>
        <dbReference type="ChEBI" id="CHEBI:18420"/>
        <label>1</label>
    </ligand>
</feature>
<feature type="binding site" evidence="1">
    <location>
        <position position="68"/>
    </location>
    <ligand>
        <name>Mg(2+)</name>
        <dbReference type="ChEBI" id="CHEBI:18420"/>
        <label>2</label>
    </ligand>
</feature>
<feature type="binding site" evidence="1">
    <location>
        <position position="141"/>
    </location>
    <ligand>
        <name>Mg(2+)</name>
        <dbReference type="ChEBI" id="CHEBI:18420"/>
        <label>1</label>
    </ligand>
</feature>